<reference key="1">
    <citation type="journal article" date="2009" name="PLoS ONE">
        <title>Complete genome sequence of Francisella tularensis subspecies holarctica FTNF002-00.</title>
        <authorList>
            <person name="Barabote R.D."/>
            <person name="Xie G."/>
            <person name="Brettin T.S."/>
            <person name="Hinrichs S.H."/>
            <person name="Fey P.D."/>
            <person name="Jay J.J."/>
            <person name="Engle J.L."/>
            <person name="Godbole S.D."/>
            <person name="Noronha J.M."/>
            <person name="Scheuermann R.H."/>
            <person name="Zhou L.W."/>
            <person name="Lion C."/>
            <person name="Dempsey M.P."/>
        </authorList>
    </citation>
    <scope>NUCLEOTIDE SEQUENCE [LARGE SCALE GENOMIC DNA]</scope>
    <source>
        <strain>FTNF002-00 / FTA</strain>
    </source>
</reference>
<organism>
    <name type="scientific">Francisella tularensis subsp. holarctica (strain FTNF002-00 / FTA)</name>
    <dbReference type="NCBI Taxonomy" id="458234"/>
    <lineage>
        <taxon>Bacteria</taxon>
        <taxon>Pseudomonadati</taxon>
        <taxon>Pseudomonadota</taxon>
        <taxon>Gammaproteobacteria</taxon>
        <taxon>Thiotrichales</taxon>
        <taxon>Francisellaceae</taxon>
        <taxon>Francisella</taxon>
    </lineage>
</organism>
<keyword id="KW-1003">Cell membrane</keyword>
<keyword id="KW-0210">Decarboxylase</keyword>
<keyword id="KW-0444">Lipid biosynthesis</keyword>
<keyword id="KW-0443">Lipid metabolism</keyword>
<keyword id="KW-0456">Lyase</keyword>
<keyword id="KW-0472">Membrane</keyword>
<keyword id="KW-0594">Phospholipid biosynthesis</keyword>
<keyword id="KW-1208">Phospholipid metabolism</keyword>
<keyword id="KW-0670">Pyruvate</keyword>
<keyword id="KW-0865">Zymogen</keyword>
<protein>
    <recommendedName>
        <fullName evidence="1">Phosphatidylserine decarboxylase proenzyme</fullName>
        <ecNumber evidence="1">4.1.1.65</ecNumber>
    </recommendedName>
    <component>
        <recommendedName>
            <fullName evidence="1">Phosphatidylserine decarboxylase alpha chain</fullName>
        </recommendedName>
    </component>
    <component>
        <recommendedName>
            <fullName evidence="1">Phosphatidylserine decarboxylase beta chain</fullName>
        </recommendedName>
    </component>
</protein>
<name>PSD_FRATF</name>
<comment type="function">
    <text evidence="1">Catalyzes the formation of phosphatidylethanolamine (PtdEtn) from phosphatidylserine (PtdSer).</text>
</comment>
<comment type="catalytic activity">
    <reaction evidence="1">
        <text>a 1,2-diacyl-sn-glycero-3-phospho-L-serine + H(+) = a 1,2-diacyl-sn-glycero-3-phosphoethanolamine + CO2</text>
        <dbReference type="Rhea" id="RHEA:20828"/>
        <dbReference type="ChEBI" id="CHEBI:15378"/>
        <dbReference type="ChEBI" id="CHEBI:16526"/>
        <dbReference type="ChEBI" id="CHEBI:57262"/>
        <dbReference type="ChEBI" id="CHEBI:64612"/>
        <dbReference type="EC" id="4.1.1.65"/>
    </reaction>
</comment>
<comment type="cofactor">
    <cofactor evidence="1">
        <name>pyruvate</name>
        <dbReference type="ChEBI" id="CHEBI:15361"/>
    </cofactor>
    <text evidence="1">Binds 1 pyruvoyl group covalently per subunit.</text>
</comment>
<comment type="pathway">
    <text evidence="1">Phospholipid metabolism; phosphatidylethanolamine biosynthesis; phosphatidylethanolamine from CDP-diacylglycerol: step 2/2.</text>
</comment>
<comment type="subunit">
    <text evidence="1">Heterodimer of a large membrane-associated beta subunit and a small pyruvoyl-containing alpha subunit.</text>
</comment>
<comment type="subcellular location">
    <subcellularLocation>
        <location evidence="1">Cell membrane</location>
        <topology evidence="1">Peripheral membrane protein</topology>
    </subcellularLocation>
</comment>
<comment type="PTM">
    <text evidence="1">Is synthesized initially as an inactive proenzyme. Formation of the active enzyme involves a self-maturation process in which the active site pyruvoyl group is generated from an internal serine residue via an autocatalytic post-translational modification. Two non-identical subunits are generated from the proenzyme in this reaction, and the pyruvate is formed at the N-terminus of the alpha chain, which is derived from the carboxyl end of the proenzyme. The autoendoproteolytic cleavage occurs by a canonical serine protease mechanism, in which the side chain hydroxyl group of the serine supplies its oxygen atom to form the C-terminus of the beta chain, while the remainder of the serine residue undergoes an oxidative deamination to produce ammonia and the pyruvoyl prosthetic group on the alpha chain. During this reaction, the Ser that is part of the protease active site of the proenzyme becomes the pyruvoyl prosthetic group, which constitutes an essential element of the active site of the mature decarboxylase.</text>
</comment>
<comment type="similarity">
    <text evidence="1">Belongs to the phosphatidylserine decarboxylase family. PSD-B subfamily. Prokaryotic type I sub-subfamily.</text>
</comment>
<gene>
    <name evidence="1" type="primary">psd</name>
    <name type="ordered locus">FTA_0476</name>
</gene>
<accession>A7NAF0</accession>
<evidence type="ECO:0000255" key="1">
    <source>
        <dbReference type="HAMAP-Rule" id="MF_00662"/>
    </source>
</evidence>
<dbReference type="EC" id="4.1.1.65" evidence="1"/>
<dbReference type="EMBL" id="CP000803">
    <property type="protein sequence ID" value="ABU60952.1"/>
    <property type="molecule type" value="Genomic_DNA"/>
</dbReference>
<dbReference type="SMR" id="A7NAF0"/>
<dbReference type="KEGG" id="fta:FTA_0476"/>
<dbReference type="HOGENOM" id="CLU_029061_4_1_6"/>
<dbReference type="UniPathway" id="UPA00558">
    <property type="reaction ID" value="UER00616"/>
</dbReference>
<dbReference type="GO" id="GO:0005886">
    <property type="term" value="C:plasma membrane"/>
    <property type="evidence" value="ECO:0007669"/>
    <property type="project" value="UniProtKB-SubCell"/>
</dbReference>
<dbReference type="GO" id="GO:0004609">
    <property type="term" value="F:phosphatidylserine decarboxylase activity"/>
    <property type="evidence" value="ECO:0007669"/>
    <property type="project" value="UniProtKB-UniRule"/>
</dbReference>
<dbReference type="GO" id="GO:0006646">
    <property type="term" value="P:phosphatidylethanolamine biosynthetic process"/>
    <property type="evidence" value="ECO:0007669"/>
    <property type="project" value="UniProtKB-UniRule"/>
</dbReference>
<dbReference type="HAMAP" id="MF_00662">
    <property type="entry name" value="PS_decarb_PSD_B_type1"/>
    <property type="match status" value="1"/>
</dbReference>
<dbReference type="InterPro" id="IPR003817">
    <property type="entry name" value="PS_Dcarbxylase"/>
</dbReference>
<dbReference type="InterPro" id="IPR033177">
    <property type="entry name" value="PSD-B"/>
</dbReference>
<dbReference type="InterPro" id="IPR033178">
    <property type="entry name" value="PSD_type1_pro"/>
</dbReference>
<dbReference type="NCBIfam" id="TIGR00163">
    <property type="entry name" value="PS_decarb"/>
    <property type="match status" value="1"/>
</dbReference>
<dbReference type="PANTHER" id="PTHR10067">
    <property type="entry name" value="PHOSPHATIDYLSERINE DECARBOXYLASE"/>
    <property type="match status" value="1"/>
</dbReference>
<dbReference type="PANTHER" id="PTHR10067:SF6">
    <property type="entry name" value="PHOSPHATIDYLSERINE DECARBOXYLASE PROENZYME, MITOCHONDRIAL"/>
    <property type="match status" value="1"/>
</dbReference>
<dbReference type="Pfam" id="PF02666">
    <property type="entry name" value="PS_Dcarbxylase"/>
    <property type="match status" value="1"/>
</dbReference>
<feature type="chain" id="PRO_1000026544" description="Phosphatidylserine decarboxylase beta chain" evidence="1">
    <location>
        <begin position="1"/>
        <end position="247"/>
    </location>
</feature>
<feature type="chain" id="PRO_1000026545" description="Phosphatidylserine decarboxylase alpha chain" evidence="1">
    <location>
        <begin position="248"/>
        <end position="283"/>
    </location>
</feature>
<feature type="active site" description="Charge relay system; for autoendoproteolytic cleavage activity" evidence="1">
    <location>
        <position position="90"/>
    </location>
</feature>
<feature type="active site" description="Charge relay system; for autoendoproteolytic cleavage activity" evidence="1">
    <location>
        <position position="143"/>
    </location>
</feature>
<feature type="active site" description="Charge relay system; for autoendoproteolytic cleavage activity" evidence="1">
    <location>
        <position position="248"/>
    </location>
</feature>
<feature type="active site" description="Schiff-base intermediate with substrate; via pyruvic acid; for decarboxylase activity" evidence="1">
    <location>
        <position position="248"/>
    </location>
</feature>
<feature type="site" description="Cleavage (non-hydrolytic); by autocatalysis" evidence="1">
    <location>
        <begin position="247"/>
        <end position="248"/>
    </location>
</feature>
<feature type="modified residue" description="Pyruvic acid (Ser); by autocatalysis" evidence="1">
    <location>
        <position position="248"/>
    </location>
</feature>
<sequence length="283" mass="32127">MRDNLFIYLQYLLPHTLTSRLVSKLADSENKIIKNHLIKLAIKKFNINLVEAKETDISKYKSFNDFFIRELKDDLRPISNDKNVISSPADGVLSQFGTITDNSLIQAKGKLFSLESLIASSSTTSFTKFATIYLSPKDYHRVHMPIDGKLTKMVYIPGKLFSVNKITTSKVDNLFAKNERLICYFDTIIGEIAVIFVGALLVAGIETVWHGKIAPNYYKDIQTWDYNSAKFNIKFNKGDILGWFNFGSTVIILTSGNNVSFKFEENKNNIKIQVNQDLALITE</sequence>
<proteinExistence type="inferred from homology"/>